<dbReference type="EMBL" id="CP001638">
    <property type="protein sequence ID" value="ACS23522.1"/>
    <property type="molecule type" value="Genomic_DNA"/>
</dbReference>
<dbReference type="SMR" id="C5D6K5"/>
<dbReference type="STRING" id="471223.GWCH70_0629"/>
<dbReference type="KEGG" id="gwc:GWCH70_0629"/>
<dbReference type="eggNOG" id="COG3679">
    <property type="taxonomic scope" value="Bacteria"/>
</dbReference>
<dbReference type="HOGENOM" id="CLU_140243_3_0_9"/>
<dbReference type="OrthoDB" id="9811402at2"/>
<dbReference type="Gene3D" id="1.20.1500.10">
    <property type="entry name" value="YheA/YmcA-like"/>
    <property type="match status" value="1"/>
</dbReference>
<dbReference type="HAMAP" id="MF_01526">
    <property type="entry name" value="UPF0342"/>
    <property type="match status" value="1"/>
</dbReference>
<dbReference type="InterPro" id="IPR010368">
    <property type="entry name" value="Com_YlbF"/>
</dbReference>
<dbReference type="InterPro" id="IPR023378">
    <property type="entry name" value="YheA/YmcA-like_dom_sf"/>
</dbReference>
<dbReference type="Pfam" id="PF06133">
    <property type="entry name" value="Com_YlbF"/>
    <property type="match status" value="1"/>
</dbReference>
<dbReference type="SUPFAM" id="SSF158622">
    <property type="entry name" value="YheA/YmcA-like"/>
    <property type="match status" value="1"/>
</dbReference>
<name>Y629_GEOSW</name>
<feature type="chain" id="PRO_1000215382" description="UPF0342 protein GWCH70_0629">
    <location>
        <begin position="1"/>
        <end position="117"/>
    </location>
</feature>
<sequence length="117" mass="13820">MSNQLYVLAEQLEQAIRTSSDFQQLKQAYEAVRRDETAYRLFTNFRNLQMRLHEKQMTGAEILPEEIEQAQKAMALTQQNEKLAQLMTLEQRMSMVLSDIQQITMKPLEELYRSFAE</sequence>
<organism>
    <name type="scientific">Geobacillus sp. (strain WCH70)</name>
    <dbReference type="NCBI Taxonomy" id="471223"/>
    <lineage>
        <taxon>Bacteria</taxon>
        <taxon>Bacillati</taxon>
        <taxon>Bacillota</taxon>
        <taxon>Bacilli</taxon>
        <taxon>Bacillales</taxon>
        <taxon>Anoxybacillaceae</taxon>
        <taxon>Geobacillus</taxon>
    </lineage>
</organism>
<proteinExistence type="inferred from homology"/>
<accession>C5D6K5</accession>
<gene>
    <name type="ordered locus">GWCH70_0629</name>
</gene>
<evidence type="ECO:0000255" key="1">
    <source>
        <dbReference type="HAMAP-Rule" id="MF_01526"/>
    </source>
</evidence>
<comment type="similarity">
    <text evidence="1">Belongs to the UPF0342 family.</text>
</comment>
<reference key="1">
    <citation type="submission" date="2009-06" db="EMBL/GenBank/DDBJ databases">
        <title>Complete sequence of chromosome of Geopacillus sp. WCH70.</title>
        <authorList>
            <consortium name="US DOE Joint Genome Institute"/>
            <person name="Lucas S."/>
            <person name="Copeland A."/>
            <person name="Lapidus A."/>
            <person name="Glavina del Rio T."/>
            <person name="Dalin E."/>
            <person name="Tice H."/>
            <person name="Bruce D."/>
            <person name="Goodwin L."/>
            <person name="Pitluck S."/>
            <person name="Chertkov O."/>
            <person name="Brettin T."/>
            <person name="Detter J.C."/>
            <person name="Han C."/>
            <person name="Larimer F."/>
            <person name="Land M."/>
            <person name="Hauser L."/>
            <person name="Kyrpides N."/>
            <person name="Mikhailova N."/>
            <person name="Brumm P."/>
            <person name="Mead D.A."/>
            <person name="Richardson P."/>
        </authorList>
    </citation>
    <scope>NUCLEOTIDE SEQUENCE [LARGE SCALE GENOMIC DNA]</scope>
    <source>
        <strain>WCH70</strain>
    </source>
</reference>
<protein>
    <recommendedName>
        <fullName evidence="1">UPF0342 protein GWCH70_0629</fullName>
    </recommendedName>
</protein>